<organism>
    <name type="scientific">Carboxydothermus hydrogenoformans (strain ATCC BAA-161 / DSM 6008 / Z-2901)</name>
    <dbReference type="NCBI Taxonomy" id="246194"/>
    <lineage>
        <taxon>Bacteria</taxon>
        <taxon>Bacillati</taxon>
        <taxon>Bacillota</taxon>
        <taxon>Clostridia</taxon>
        <taxon>Thermoanaerobacterales</taxon>
        <taxon>Thermoanaerobacteraceae</taxon>
        <taxon>Carboxydothermus</taxon>
    </lineage>
</organism>
<proteinExistence type="inferred from homology"/>
<name>PANB_CARHZ</name>
<keyword id="KW-0963">Cytoplasm</keyword>
<keyword id="KW-0460">Magnesium</keyword>
<keyword id="KW-0479">Metal-binding</keyword>
<keyword id="KW-0566">Pantothenate biosynthesis</keyword>
<keyword id="KW-1185">Reference proteome</keyword>
<keyword id="KW-0808">Transferase</keyword>
<evidence type="ECO:0000255" key="1">
    <source>
        <dbReference type="HAMAP-Rule" id="MF_00156"/>
    </source>
</evidence>
<feature type="chain" id="PRO_0000297241" description="3-methyl-2-oxobutanoate hydroxymethyltransferase">
    <location>
        <begin position="1"/>
        <end position="276"/>
    </location>
</feature>
<feature type="active site" description="Proton acceptor" evidence="1">
    <location>
        <position position="183"/>
    </location>
</feature>
<feature type="binding site" evidence="1">
    <location>
        <begin position="45"/>
        <end position="46"/>
    </location>
    <ligand>
        <name>3-methyl-2-oxobutanoate</name>
        <dbReference type="ChEBI" id="CHEBI:11851"/>
    </ligand>
</feature>
<feature type="binding site" evidence="1">
    <location>
        <position position="45"/>
    </location>
    <ligand>
        <name>Mg(2+)</name>
        <dbReference type="ChEBI" id="CHEBI:18420"/>
    </ligand>
</feature>
<feature type="binding site" evidence="1">
    <location>
        <position position="84"/>
    </location>
    <ligand>
        <name>3-methyl-2-oxobutanoate</name>
        <dbReference type="ChEBI" id="CHEBI:11851"/>
    </ligand>
</feature>
<feature type="binding site" evidence="1">
    <location>
        <position position="84"/>
    </location>
    <ligand>
        <name>Mg(2+)</name>
        <dbReference type="ChEBI" id="CHEBI:18420"/>
    </ligand>
</feature>
<feature type="binding site" evidence="1">
    <location>
        <position position="114"/>
    </location>
    <ligand>
        <name>3-methyl-2-oxobutanoate</name>
        <dbReference type="ChEBI" id="CHEBI:11851"/>
    </ligand>
</feature>
<feature type="binding site" evidence="1">
    <location>
        <position position="116"/>
    </location>
    <ligand>
        <name>Mg(2+)</name>
        <dbReference type="ChEBI" id="CHEBI:18420"/>
    </ligand>
</feature>
<dbReference type="EC" id="2.1.2.11" evidence="1"/>
<dbReference type="EMBL" id="CP000141">
    <property type="protein sequence ID" value="ABB15151.1"/>
    <property type="molecule type" value="Genomic_DNA"/>
</dbReference>
<dbReference type="RefSeq" id="WP_011345247.1">
    <property type="nucleotide sequence ID" value="NC_007503.1"/>
</dbReference>
<dbReference type="SMR" id="Q3A9L0"/>
<dbReference type="FunCoup" id="Q3A9L0">
    <property type="interactions" value="345"/>
</dbReference>
<dbReference type="STRING" id="246194.CHY_2377"/>
<dbReference type="KEGG" id="chy:CHY_2377"/>
<dbReference type="eggNOG" id="COG0413">
    <property type="taxonomic scope" value="Bacteria"/>
</dbReference>
<dbReference type="HOGENOM" id="CLU_036645_1_0_9"/>
<dbReference type="InParanoid" id="Q3A9L0"/>
<dbReference type="OrthoDB" id="9781789at2"/>
<dbReference type="UniPathway" id="UPA00028">
    <property type="reaction ID" value="UER00003"/>
</dbReference>
<dbReference type="Proteomes" id="UP000002706">
    <property type="component" value="Chromosome"/>
</dbReference>
<dbReference type="GO" id="GO:0005737">
    <property type="term" value="C:cytoplasm"/>
    <property type="evidence" value="ECO:0007669"/>
    <property type="project" value="UniProtKB-SubCell"/>
</dbReference>
<dbReference type="GO" id="GO:0003864">
    <property type="term" value="F:3-methyl-2-oxobutanoate hydroxymethyltransferase activity"/>
    <property type="evidence" value="ECO:0007669"/>
    <property type="project" value="UniProtKB-UniRule"/>
</dbReference>
<dbReference type="GO" id="GO:0000287">
    <property type="term" value="F:magnesium ion binding"/>
    <property type="evidence" value="ECO:0007669"/>
    <property type="project" value="TreeGrafter"/>
</dbReference>
<dbReference type="GO" id="GO:0015940">
    <property type="term" value="P:pantothenate biosynthetic process"/>
    <property type="evidence" value="ECO:0007669"/>
    <property type="project" value="UniProtKB-UniRule"/>
</dbReference>
<dbReference type="CDD" id="cd06557">
    <property type="entry name" value="KPHMT-like"/>
    <property type="match status" value="1"/>
</dbReference>
<dbReference type="FunFam" id="3.20.20.60:FF:000003">
    <property type="entry name" value="3-methyl-2-oxobutanoate hydroxymethyltransferase"/>
    <property type="match status" value="1"/>
</dbReference>
<dbReference type="Gene3D" id="3.20.20.60">
    <property type="entry name" value="Phosphoenolpyruvate-binding domains"/>
    <property type="match status" value="1"/>
</dbReference>
<dbReference type="HAMAP" id="MF_00156">
    <property type="entry name" value="PanB"/>
    <property type="match status" value="1"/>
</dbReference>
<dbReference type="InterPro" id="IPR003700">
    <property type="entry name" value="Pantoate_hydroxy_MeTrfase"/>
</dbReference>
<dbReference type="InterPro" id="IPR015813">
    <property type="entry name" value="Pyrv/PenolPyrv_kinase-like_dom"/>
</dbReference>
<dbReference type="InterPro" id="IPR040442">
    <property type="entry name" value="Pyrv_kinase-like_dom_sf"/>
</dbReference>
<dbReference type="NCBIfam" id="TIGR00222">
    <property type="entry name" value="panB"/>
    <property type="match status" value="1"/>
</dbReference>
<dbReference type="NCBIfam" id="NF001452">
    <property type="entry name" value="PRK00311.1"/>
    <property type="match status" value="1"/>
</dbReference>
<dbReference type="PANTHER" id="PTHR20881">
    <property type="entry name" value="3-METHYL-2-OXOBUTANOATE HYDROXYMETHYLTRANSFERASE"/>
    <property type="match status" value="1"/>
</dbReference>
<dbReference type="PANTHER" id="PTHR20881:SF0">
    <property type="entry name" value="3-METHYL-2-OXOBUTANOATE HYDROXYMETHYLTRANSFERASE"/>
    <property type="match status" value="1"/>
</dbReference>
<dbReference type="Pfam" id="PF02548">
    <property type="entry name" value="Pantoate_transf"/>
    <property type="match status" value="1"/>
</dbReference>
<dbReference type="PIRSF" id="PIRSF000388">
    <property type="entry name" value="Pantoate_hydroxy_MeTrfase"/>
    <property type="match status" value="1"/>
</dbReference>
<dbReference type="SUPFAM" id="SSF51621">
    <property type="entry name" value="Phosphoenolpyruvate/pyruvate domain"/>
    <property type="match status" value="1"/>
</dbReference>
<protein>
    <recommendedName>
        <fullName evidence="1">3-methyl-2-oxobutanoate hydroxymethyltransferase</fullName>
        <ecNumber evidence="1">2.1.2.11</ecNumber>
    </recommendedName>
    <alternativeName>
        <fullName evidence="1">Ketopantoate hydroxymethyltransferase</fullName>
        <shortName evidence="1">KPHMT</shortName>
    </alternativeName>
</protein>
<sequence length="276" mass="29762">MDRVTVSSLKEMKEAGQKIAMITAYDYPSALFAEEAGAEVLLVGDSLGMVVLGYDSTVPVTMEEMLHHVKAVVRGSKRSMVVADMPFMSYQASYTDALYNAGRFLKEGGAQAVKLEGGGEIAELVAKLVTAGIPVMGHIGLTPQSVNALGGYKVQGKDLKTAQKLLDDAKALADAGAFAIVLECVPAALAAKITESIPIPTIGIGSGVNCDGQVLVYHDVLGMYPRMLPKFVKRYADLSSLIKEAIRQYVQEVKEQQFPEEKHSFTMAPEILERIY</sequence>
<accession>Q3A9L0</accession>
<comment type="function">
    <text evidence="1">Catalyzes the reversible reaction in which hydroxymethyl group from 5,10-methylenetetrahydrofolate is transferred onto alpha-ketoisovalerate to form ketopantoate.</text>
</comment>
<comment type="catalytic activity">
    <reaction evidence="1">
        <text>3-methyl-2-oxobutanoate + (6R)-5,10-methylene-5,6,7,8-tetrahydrofolate + H2O = 2-dehydropantoate + (6S)-5,6,7,8-tetrahydrofolate</text>
        <dbReference type="Rhea" id="RHEA:11824"/>
        <dbReference type="ChEBI" id="CHEBI:11561"/>
        <dbReference type="ChEBI" id="CHEBI:11851"/>
        <dbReference type="ChEBI" id="CHEBI:15377"/>
        <dbReference type="ChEBI" id="CHEBI:15636"/>
        <dbReference type="ChEBI" id="CHEBI:57453"/>
        <dbReference type="EC" id="2.1.2.11"/>
    </reaction>
</comment>
<comment type="cofactor">
    <cofactor evidence="1">
        <name>Mg(2+)</name>
        <dbReference type="ChEBI" id="CHEBI:18420"/>
    </cofactor>
    <text evidence="1">Binds 1 Mg(2+) ion per subunit.</text>
</comment>
<comment type="pathway">
    <text evidence="1">Cofactor biosynthesis; (R)-pantothenate biosynthesis; (R)-pantoate from 3-methyl-2-oxobutanoate: step 1/2.</text>
</comment>
<comment type="subunit">
    <text evidence="1">Homodecamer; pentamer of dimers.</text>
</comment>
<comment type="subcellular location">
    <subcellularLocation>
        <location evidence="1">Cytoplasm</location>
    </subcellularLocation>
</comment>
<comment type="similarity">
    <text evidence="1">Belongs to the PanB family.</text>
</comment>
<reference key="1">
    <citation type="journal article" date="2005" name="PLoS Genet.">
        <title>Life in hot carbon monoxide: the complete genome sequence of Carboxydothermus hydrogenoformans Z-2901.</title>
        <authorList>
            <person name="Wu M."/>
            <person name="Ren Q."/>
            <person name="Durkin A.S."/>
            <person name="Daugherty S.C."/>
            <person name="Brinkac L.M."/>
            <person name="Dodson R.J."/>
            <person name="Madupu R."/>
            <person name="Sullivan S.A."/>
            <person name="Kolonay J.F."/>
            <person name="Nelson W.C."/>
            <person name="Tallon L.J."/>
            <person name="Jones K.M."/>
            <person name="Ulrich L.E."/>
            <person name="Gonzalez J.M."/>
            <person name="Zhulin I.B."/>
            <person name="Robb F.T."/>
            <person name="Eisen J.A."/>
        </authorList>
    </citation>
    <scope>NUCLEOTIDE SEQUENCE [LARGE SCALE GENOMIC DNA]</scope>
    <source>
        <strain>ATCC BAA-161 / DSM 6008 / Z-2901</strain>
    </source>
</reference>
<gene>
    <name evidence="1" type="primary">panB</name>
    <name type="ordered locus">CHY_2377</name>
</gene>